<organism>
    <name type="scientific">Solidesulfovibrio magneticus (strain ATCC 700980 / DSM 13731 / RS-1)</name>
    <name type="common">Desulfovibrio magneticus</name>
    <dbReference type="NCBI Taxonomy" id="573370"/>
    <lineage>
        <taxon>Bacteria</taxon>
        <taxon>Pseudomonadati</taxon>
        <taxon>Thermodesulfobacteriota</taxon>
        <taxon>Desulfovibrionia</taxon>
        <taxon>Desulfovibrionales</taxon>
        <taxon>Desulfovibrionaceae</taxon>
        <taxon>Solidesulfovibrio</taxon>
    </lineage>
</organism>
<accession>C4XT96</accession>
<evidence type="ECO:0000255" key="1">
    <source>
        <dbReference type="HAMAP-Rule" id="MF_01006"/>
    </source>
</evidence>
<feature type="chain" id="PRO_1000213149" description="Undecaprenyl-diphosphatase">
    <location>
        <begin position="1"/>
        <end position="265"/>
    </location>
</feature>
<feature type="transmembrane region" description="Helical" evidence="1">
    <location>
        <begin position="19"/>
        <end position="39"/>
    </location>
</feature>
<feature type="transmembrane region" description="Helical" evidence="1">
    <location>
        <begin position="42"/>
        <end position="62"/>
    </location>
</feature>
<feature type="transmembrane region" description="Helical" evidence="1">
    <location>
        <begin position="80"/>
        <end position="100"/>
    </location>
</feature>
<feature type="transmembrane region" description="Helical" evidence="1">
    <location>
        <begin position="108"/>
        <end position="128"/>
    </location>
</feature>
<feature type="transmembrane region" description="Helical" evidence="1">
    <location>
        <begin position="143"/>
        <end position="163"/>
    </location>
</feature>
<feature type="transmembrane region" description="Helical" evidence="1">
    <location>
        <begin position="181"/>
        <end position="201"/>
    </location>
</feature>
<feature type="transmembrane region" description="Helical" evidence="1">
    <location>
        <begin position="220"/>
        <end position="240"/>
    </location>
</feature>
<feature type="transmembrane region" description="Helical" evidence="1">
    <location>
        <begin position="243"/>
        <end position="263"/>
    </location>
</feature>
<name>UPPP_SOLM1</name>
<dbReference type="EC" id="3.6.1.27" evidence="1"/>
<dbReference type="EMBL" id="AP010904">
    <property type="protein sequence ID" value="BAH75893.1"/>
    <property type="molecule type" value="Genomic_DNA"/>
</dbReference>
<dbReference type="RefSeq" id="WP_015861073.1">
    <property type="nucleotide sequence ID" value="NC_012796.1"/>
</dbReference>
<dbReference type="SMR" id="C4XT96"/>
<dbReference type="STRING" id="573370.DMR_24020"/>
<dbReference type="KEGG" id="dma:DMR_24020"/>
<dbReference type="eggNOG" id="COG1968">
    <property type="taxonomic scope" value="Bacteria"/>
</dbReference>
<dbReference type="HOGENOM" id="CLU_060296_2_0_7"/>
<dbReference type="OrthoDB" id="9808289at2"/>
<dbReference type="Proteomes" id="UP000009071">
    <property type="component" value="Chromosome"/>
</dbReference>
<dbReference type="GO" id="GO:0005886">
    <property type="term" value="C:plasma membrane"/>
    <property type="evidence" value="ECO:0007669"/>
    <property type="project" value="UniProtKB-SubCell"/>
</dbReference>
<dbReference type="GO" id="GO:0050380">
    <property type="term" value="F:undecaprenyl-diphosphatase activity"/>
    <property type="evidence" value="ECO:0007669"/>
    <property type="project" value="UniProtKB-UniRule"/>
</dbReference>
<dbReference type="GO" id="GO:0071555">
    <property type="term" value="P:cell wall organization"/>
    <property type="evidence" value="ECO:0007669"/>
    <property type="project" value="UniProtKB-KW"/>
</dbReference>
<dbReference type="GO" id="GO:0009252">
    <property type="term" value="P:peptidoglycan biosynthetic process"/>
    <property type="evidence" value="ECO:0007669"/>
    <property type="project" value="UniProtKB-KW"/>
</dbReference>
<dbReference type="GO" id="GO:0008360">
    <property type="term" value="P:regulation of cell shape"/>
    <property type="evidence" value="ECO:0007669"/>
    <property type="project" value="UniProtKB-KW"/>
</dbReference>
<dbReference type="GO" id="GO:0046677">
    <property type="term" value="P:response to antibiotic"/>
    <property type="evidence" value="ECO:0007669"/>
    <property type="project" value="UniProtKB-UniRule"/>
</dbReference>
<dbReference type="HAMAP" id="MF_01006">
    <property type="entry name" value="Undec_diphosphatase"/>
    <property type="match status" value="1"/>
</dbReference>
<dbReference type="InterPro" id="IPR003824">
    <property type="entry name" value="UppP"/>
</dbReference>
<dbReference type="NCBIfam" id="NF001389">
    <property type="entry name" value="PRK00281.1-2"/>
    <property type="match status" value="1"/>
</dbReference>
<dbReference type="NCBIfam" id="NF001390">
    <property type="entry name" value="PRK00281.1-4"/>
    <property type="match status" value="1"/>
</dbReference>
<dbReference type="NCBIfam" id="TIGR00753">
    <property type="entry name" value="undec_PP_bacA"/>
    <property type="match status" value="1"/>
</dbReference>
<dbReference type="PANTHER" id="PTHR30622">
    <property type="entry name" value="UNDECAPRENYL-DIPHOSPHATASE"/>
    <property type="match status" value="1"/>
</dbReference>
<dbReference type="PANTHER" id="PTHR30622:SF3">
    <property type="entry name" value="UNDECAPRENYL-DIPHOSPHATASE"/>
    <property type="match status" value="1"/>
</dbReference>
<dbReference type="Pfam" id="PF02673">
    <property type="entry name" value="BacA"/>
    <property type="match status" value="1"/>
</dbReference>
<reference key="1">
    <citation type="journal article" date="2009" name="Genome Res.">
        <title>Whole genome sequence of Desulfovibrio magneticus strain RS-1 revealed common gene clusters in magnetotactic bacteria.</title>
        <authorList>
            <person name="Nakazawa H."/>
            <person name="Arakaki A."/>
            <person name="Narita-Yamada S."/>
            <person name="Yashiro I."/>
            <person name="Jinno K."/>
            <person name="Aoki N."/>
            <person name="Tsuruyama A."/>
            <person name="Okamura Y."/>
            <person name="Tanikawa S."/>
            <person name="Fujita N."/>
            <person name="Takeyama H."/>
            <person name="Matsunaga T."/>
        </authorList>
    </citation>
    <scope>NUCLEOTIDE SEQUENCE [LARGE SCALE GENOMIC DNA]</scope>
    <source>
        <strain>ATCC 700980 / DSM 13731 / RS-1</strain>
    </source>
</reference>
<gene>
    <name evidence="1" type="primary">uppP</name>
    <name type="ordered locus">DMR_24020</name>
</gene>
<proteinExistence type="inferred from homology"/>
<sequence>MTESLAAVVLGIVEGATEFLPVSSTGHLILVGHLIGFTGEKADSFDVIIQLGAILAVVCLYWRRFWWLVSPKPHHAFSGIRGLWMLFLTSLPAGLIGLVARKSIKAYLFNPWSVALALSVGAVMIFLVEQRKTRDRYYSLDEMTPGLALGIGCFQCLSLWPGFSRSAATIMGGMLLGAKRSLAAEYSFIGAVPLMFAATLYDFYKSAHLFSADDLGVLGIGFVVSFVSALIAVKAFIVLVQRITLRPFAWYRLALAAAVFFFWPK</sequence>
<keyword id="KW-0046">Antibiotic resistance</keyword>
<keyword id="KW-0997">Cell inner membrane</keyword>
<keyword id="KW-1003">Cell membrane</keyword>
<keyword id="KW-0133">Cell shape</keyword>
<keyword id="KW-0961">Cell wall biogenesis/degradation</keyword>
<keyword id="KW-0378">Hydrolase</keyword>
<keyword id="KW-0472">Membrane</keyword>
<keyword id="KW-0573">Peptidoglycan synthesis</keyword>
<keyword id="KW-0812">Transmembrane</keyword>
<keyword id="KW-1133">Transmembrane helix</keyword>
<comment type="function">
    <text evidence="1">Catalyzes the dephosphorylation of undecaprenyl diphosphate (UPP). Confers resistance to bacitracin.</text>
</comment>
<comment type="catalytic activity">
    <reaction evidence="1">
        <text>di-trans,octa-cis-undecaprenyl diphosphate + H2O = di-trans,octa-cis-undecaprenyl phosphate + phosphate + H(+)</text>
        <dbReference type="Rhea" id="RHEA:28094"/>
        <dbReference type="ChEBI" id="CHEBI:15377"/>
        <dbReference type="ChEBI" id="CHEBI:15378"/>
        <dbReference type="ChEBI" id="CHEBI:43474"/>
        <dbReference type="ChEBI" id="CHEBI:58405"/>
        <dbReference type="ChEBI" id="CHEBI:60392"/>
        <dbReference type="EC" id="3.6.1.27"/>
    </reaction>
</comment>
<comment type="subcellular location">
    <subcellularLocation>
        <location evidence="1">Cell inner membrane</location>
        <topology evidence="1">Multi-pass membrane protein</topology>
    </subcellularLocation>
</comment>
<comment type="miscellaneous">
    <text>Bacitracin is thought to be involved in the inhibition of peptidoglycan synthesis by sequestering undecaprenyl diphosphate, thereby reducing the pool of lipid carrier available.</text>
</comment>
<comment type="similarity">
    <text evidence="1">Belongs to the UppP family.</text>
</comment>
<protein>
    <recommendedName>
        <fullName evidence="1">Undecaprenyl-diphosphatase</fullName>
        <ecNumber evidence="1">3.6.1.27</ecNumber>
    </recommendedName>
    <alternativeName>
        <fullName evidence="1">Bacitracin resistance protein</fullName>
    </alternativeName>
    <alternativeName>
        <fullName evidence="1">Undecaprenyl pyrophosphate phosphatase</fullName>
    </alternativeName>
</protein>